<comment type="function">
    <text evidence="1">Catalyzes the conversion of urocanate to 4-imidazolone-5-propionate.</text>
</comment>
<comment type="catalytic activity">
    <reaction evidence="1">
        <text>4-imidazolone-5-propanoate = trans-urocanate + H2O</text>
        <dbReference type="Rhea" id="RHEA:13101"/>
        <dbReference type="ChEBI" id="CHEBI:15377"/>
        <dbReference type="ChEBI" id="CHEBI:17771"/>
        <dbReference type="ChEBI" id="CHEBI:77893"/>
        <dbReference type="EC" id="4.2.1.49"/>
    </reaction>
</comment>
<comment type="cofactor">
    <cofactor evidence="1">
        <name>NAD(+)</name>
        <dbReference type="ChEBI" id="CHEBI:57540"/>
    </cofactor>
    <text evidence="1">Binds 1 NAD(+) per subunit.</text>
</comment>
<comment type="pathway">
    <text evidence="1">Amino-acid degradation; L-histidine degradation into L-glutamate; N-formimidoyl-L-glutamate from L-histidine: step 2/3.</text>
</comment>
<comment type="subcellular location">
    <subcellularLocation>
        <location evidence="1">Cytoplasm</location>
    </subcellularLocation>
</comment>
<comment type="similarity">
    <text evidence="1">Belongs to the urocanase family.</text>
</comment>
<feature type="chain" id="PRO_1000025142" description="Urocanate hydratase">
    <location>
        <begin position="1"/>
        <end position="557"/>
    </location>
</feature>
<feature type="active site" evidence="1">
    <location>
        <position position="410"/>
    </location>
</feature>
<feature type="binding site" evidence="1">
    <location>
        <begin position="52"/>
        <end position="53"/>
    </location>
    <ligand>
        <name>NAD(+)</name>
        <dbReference type="ChEBI" id="CHEBI:57540"/>
    </ligand>
</feature>
<feature type="binding site" evidence="1">
    <location>
        <position position="130"/>
    </location>
    <ligand>
        <name>NAD(+)</name>
        <dbReference type="ChEBI" id="CHEBI:57540"/>
    </ligand>
</feature>
<feature type="binding site" evidence="1">
    <location>
        <begin position="176"/>
        <end position="178"/>
    </location>
    <ligand>
        <name>NAD(+)</name>
        <dbReference type="ChEBI" id="CHEBI:57540"/>
    </ligand>
</feature>
<feature type="binding site" evidence="1">
    <location>
        <position position="196"/>
    </location>
    <ligand>
        <name>NAD(+)</name>
        <dbReference type="ChEBI" id="CHEBI:57540"/>
    </ligand>
</feature>
<feature type="binding site" evidence="1">
    <location>
        <position position="201"/>
    </location>
    <ligand>
        <name>NAD(+)</name>
        <dbReference type="ChEBI" id="CHEBI:57540"/>
    </ligand>
</feature>
<feature type="binding site" evidence="1">
    <location>
        <begin position="242"/>
        <end position="243"/>
    </location>
    <ligand>
        <name>NAD(+)</name>
        <dbReference type="ChEBI" id="CHEBI:57540"/>
    </ligand>
</feature>
<feature type="binding site" evidence="1">
    <location>
        <begin position="263"/>
        <end position="267"/>
    </location>
    <ligand>
        <name>NAD(+)</name>
        <dbReference type="ChEBI" id="CHEBI:57540"/>
    </ligand>
</feature>
<feature type="binding site" evidence="1">
    <location>
        <begin position="273"/>
        <end position="274"/>
    </location>
    <ligand>
        <name>NAD(+)</name>
        <dbReference type="ChEBI" id="CHEBI:57540"/>
    </ligand>
</feature>
<feature type="binding site" evidence="1">
    <location>
        <position position="322"/>
    </location>
    <ligand>
        <name>NAD(+)</name>
        <dbReference type="ChEBI" id="CHEBI:57540"/>
    </ligand>
</feature>
<feature type="binding site" evidence="1">
    <location>
        <position position="492"/>
    </location>
    <ligand>
        <name>NAD(+)</name>
        <dbReference type="ChEBI" id="CHEBI:57540"/>
    </ligand>
</feature>
<gene>
    <name evidence="1" type="primary">hutU</name>
    <name type="ordered locus">PSHAa2739</name>
</gene>
<sequence>MNNRLDNNRTIRAPHGDKISAKSWQTEAAKRMLMNNLDPDVAEHPHALVVYGGIGRAARDWPSYDKIIATLDRLEDDETLLVQSGKPVGVFKTHSNAPRVLIANSNLVPHWANWEHFNELDKKGLMMYGQMTAGSWIYIGSQGIVQGTYETFVAMAKQHFAGSAKGKWVLTGGLGGMGGAQPLAATMAGFCALVVECDETRIDFRIKTGYVDIKANNLEHALQLITNACVKGDALSVGLLGNAADVFSTLVKSGVTPDVVTDQTSAHDPLNGYLPQGWSMEHAAKMREQDPKAVVTAAKQSMAVQVRAMLALQQAGAATTDYGNNIRQMAFDEGVTNAFDFPGFVPAYIRPLFCEGIGPFRWVALSGDPEDIYKTDAKVKELIPDDAHLHNWLDMARKRIQFQGLPARICWVGLKDRARLALAFNNMVKNGELKAPVVIGRDHLDSGSVASPNRETEAMLDGSDAVSDWPLLNALLNTASGATWVSLHHGGGVGMGFSQHAGVVIVADGSDEAKQRIARVLWNDPATGVMRHADAGYDIAKNCAKEQNLDLPMLNEE</sequence>
<name>HUTU_PSET1</name>
<dbReference type="EC" id="4.2.1.49" evidence="1"/>
<dbReference type="EMBL" id="CR954246">
    <property type="protein sequence ID" value="CAI87787.1"/>
    <property type="molecule type" value="Genomic_DNA"/>
</dbReference>
<dbReference type="SMR" id="Q3IJC7"/>
<dbReference type="STRING" id="326442.PSHAa2739"/>
<dbReference type="KEGG" id="pha:PSHAa2739"/>
<dbReference type="PATRIC" id="fig|326442.8.peg.2649"/>
<dbReference type="eggNOG" id="COG2987">
    <property type="taxonomic scope" value="Bacteria"/>
</dbReference>
<dbReference type="HOGENOM" id="CLU_018868_0_1_6"/>
<dbReference type="BioCyc" id="PHAL326442:PSHA_RS13470-MONOMER"/>
<dbReference type="UniPathway" id="UPA00379">
    <property type="reaction ID" value="UER00550"/>
</dbReference>
<dbReference type="Proteomes" id="UP000006843">
    <property type="component" value="Chromosome I"/>
</dbReference>
<dbReference type="GO" id="GO:0005737">
    <property type="term" value="C:cytoplasm"/>
    <property type="evidence" value="ECO:0007669"/>
    <property type="project" value="UniProtKB-SubCell"/>
</dbReference>
<dbReference type="GO" id="GO:0016153">
    <property type="term" value="F:urocanate hydratase activity"/>
    <property type="evidence" value="ECO:0007669"/>
    <property type="project" value="UniProtKB-UniRule"/>
</dbReference>
<dbReference type="GO" id="GO:0019556">
    <property type="term" value="P:L-histidine catabolic process to glutamate and formamide"/>
    <property type="evidence" value="ECO:0007669"/>
    <property type="project" value="UniProtKB-UniPathway"/>
</dbReference>
<dbReference type="GO" id="GO:0019557">
    <property type="term" value="P:L-histidine catabolic process to glutamate and formate"/>
    <property type="evidence" value="ECO:0007669"/>
    <property type="project" value="UniProtKB-UniPathway"/>
</dbReference>
<dbReference type="FunFam" id="3.40.50.10730:FF:000001">
    <property type="entry name" value="Urocanate hydratase"/>
    <property type="match status" value="1"/>
</dbReference>
<dbReference type="Gene3D" id="3.40.50.10730">
    <property type="entry name" value="Urocanase like domains"/>
    <property type="match status" value="1"/>
</dbReference>
<dbReference type="Gene3D" id="3.40.1770.10">
    <property type="entry name" value="Urocanase superfamily"/>
    <property type="match status" value="1"/>
</dbReference>
<dbReference type="HAMAP" id="MF_00577">
    <property type="entry name" value="HutU"/>
    <property type="match status" value="1"/>
</dbReference>
<dbReference type="InterPro" id="IPR055351">
    <property type="entry name" value="Urocanase"/>
</dbReference>
<dbReference type="InterPro" id="IPR023637">
    <property type="entry name" value="Urocanase-like"/>
</dbReference>
<dbReference type="InterPro" id="IPR035401">
    <property type="entry name" value="Urocanase_C"/>
</dbReference>
<dbReference type="InterPro" id="IPR038364">
    <property type="entry name" value="Urocanase_central_sf"/>
</dbReference>
<dbReference type="InterPro" id="IPR023636">
    <property type="entry name" value="Urocanase_CS"/>
</dbReference>
<dbReference type="InterPro" id="IPR035400">
    <property type="entry name" value="Urocanase_N"/>
</dbReference>
<dbReference type="InterPro" id="IPR035085">
    <property type="entry name" value="Urocanase_Rossmann-like"/>
</dbReference>
<dbReference type="InterPro" id="IPR036190">
    <property type="entry name" value="Urocanase_sf"/>
</dbReference>
<dbReference type="NCBIfam" id="TIGR01228">
    <property type="entry name" value="hutU"/>
    <property type="match status" value="1"/>
</dbReference>
<dbReference type="NCBIfam" id="NF003820">
    <property type="entry name" value="PRK05414.1"/>
    <property type="match status" value="1"/>
</dbReference>
<dbReference type="PANTHER" id="PTHR12216">
    <property type="entry name" value="UROCANATE HYDRATASE"/>
    <property type="match status" value="1"/>
</dbReference>
<dbReference type="PANTHER" id="PTHR12216:SF4">
    <property type="entry name" value="UROCANATE HYDRATASE"/>
    <property type="match status" value="1"/>
</dbReference>
<dbReference type="Pfam" id="PF01175">
    <property type="entry name" value="Urocanase"/>
    <property type="match status" value="1"/>
</dbReference>
<dbReference type="Pfam" id="PF17392">
    <property type="entry name" value="Urocanase_C"/>
    <property type="match status" value="1"/>
</dbReference>
<dbReference type="Pfam" id="PF17391">
    <property type="entry name" value="Urocanase_N"/>
    <property type="match status" value="1"/>
</dbReference>
<dbReference type="PIRSF" id="PIRSF001423">
    <property type="entry name" value="Urocanate_hydrat"/>
    <property type="match status" value="1"/>
</dbReference>
<dbReference type="SUPFAM" id="SSF111326">
    <property type="entry name" value="Urocanase"/>
    <property type="match status" value="1"/>
</dbReference>
<dbReference type="PROSITE" id="PS01233">
    <property type="entry name" value="UROCANASE"/>
    <property type="match status" value="1"/>
</dbReference>
<evidence type="ECO:0000255" key="1">
    <source>
        <dbReference type="HAMAP-Rule" id="MF_00577"/>
    </source>
</evidence>
<keyword id="KW-0963">Cytoplasm</keyword>
<keyword id="KW-0369">Histidine metabolism</keyword>
<keyword id="KW-0456">Lyase</keyword>
<keyword id="KW-0520">NAD</keyword>
<keyword id="KW-1185">Reference proteome</keyword>
<protein>
    <recommendedName>
        <fullName evidence="1">Urocanate hydratase</fullName>
        <shortName evidence="1">Urocanase</shortName>
        <ecNumber evidence="1">4.2.1.49</ecNumber>
    </recommendedName>
    <alternativeName>
        <fullName evidence="1">Imidazolonepropionate hydrolase</fullName>
    </alternativeName>
</protein>
<accession>Q3IJC7</accession>
<reference key="1">
    <citation type="journal article" date="2005" name="Genome Res.">
        <title>Coping with cold: the genome of the versatile marine Antarctica bacterium Pseudoalteromonas haloplanktis TAC125.</title>
        <authorList>
            <person name="Medigue C."/>
            <person name="Krin E."/>
            <person name="Pascal G."/>
            <person name="Barbe V."/>
            <person name="Bernsel A."/>
            <person name="Bertin P.N."/>
            <person name="Cheung F."/>
            <person name="Cruveiller S."/>
            <person name="D'Amico S."/>
            <person name="Duilio A."/>
            <person name="Fang G."/>
            <person name="Feller G."/>
            <person name="Ho C."/>
            <person name="Mangenot S."/>
            <person name="Marino G."/>
            <person name="Nilsson J."/>
            <person name="Parrilli E."/>
            <person name="Rocha E.P.C."/>
            <person name="Rouy Z."/>
            <person name="Sekowska A."/>
            <person name="Tutino M.L."/>
            <person name="Vallenet D."/>
            <person name="von Heijne G."/>
            <person name="Danchin A."/>
        </authorList>
    </citation>
    <scope>NUCLEOTIDE SEQUENCE [LARGE SCALE GENOMIC DNA]</scope>
    <source>
        <strain>TAC 125</strain>
    </source>
</reference>
<proteinExistence type="inferred from homology"/>
<organism>
    <name type="scientific">Pseudoalteromonas translucida (strain TAC 125)</name>
    <dbReference type="NCBI Taxonomy" id="326442"/>
    <lineage>
        <taxon>Bacteria</taxon>
        <taxon>Pseudomonadati</taxon>
        <taxon>Pseudomonadota</taxon>
        <taxon>Gammaproteobacteria</taxon>
        <taxon>Alteromonadales</taxon>
        <taxon>Pseudoalteromonadaceae</taxon>
        <taxon>Pseudoalteromonas</taxon>
    </lineage>
</organism>